<reference key="1">
    <citation type="journal article" date="2003" name="Proc. Natl. Acad. Sci. U.S.A.">
        <title>The complete genome sequence of Mycobacterium bovis.</title>
        <authorList>
            <person name="Garnier T."/>
            <person name="Eiglmeier K."/>
            <person name="Camus J.-C."/>
            <person name="Medina N."/>
            <person name="Mansoor H."/>
            <person name="Pryor M."/>
            <person name="Duthoy S."/>
            <person name="Grondin S."/>
            <person name="Lacroix C."/>
            <person name="Monsempe C."/>
            <person name="Simon S."/>
            <person name="Harris B."/>
            <person name="Atkin R."/>
            <person name="Doggett J."/>
            <person name="Mayes R."/>
            <person name="Keating L."/>
            <person name="Wheeler P.R."/>
            <person name="Parkhill J."/>
            <person name="Barrell B.G."/>
            <person name="Cole S.T."/>
            <person name="Gordon S.V."/>
            <person name="Hewinson R.G."/>
        </authorList>
    </citation>
    <scope>NUCLEOTIDE SEQUENCE [LARGE SCALE GENOMIC DNA]</scope>
    <source>
        <strain>ATCC BAA-935 / AF2122/97</strain>
    </source>
</reference>
<reference key="2">
    <citation type="journal article" date="2017" name="Genome Announc.">
        <title>Updated reference genome sequence and annotation of Mycobacterium bovis AF2122/97.</title>
        <authorList>
            <person name="Malone K.M."/>
            <person name="Farrell D."/>
            <person name="Stuber T.P."/>
            <person name="Schubert O.T."/>
            <person name="Aebersold R."/>
            <person name="Robbe-Austerman S."/>
            <person name="Gordon S.V."/>
        </authorList>
    </citation>
    <scope>NUCLEOTIDE SEQUENCE [LARGE SCALE GENOMIC DNA]</scope>
    <scope>GENOME REANNOTATION</scope>
    <source>
        <strain>ATCC BAA-935 / AF2122/97</strain>
    </source>
</reference>
<name>PLSB1_MYCBO</name>
<gene>
    <name type="primary">plsB1</name>
    <name type="ordered locus">BQ2027_MB1577</name>
</gene>
<feature type="chain" id="PRO_0000195245" description="Putative acyltransferase plsB1">
    <location>
        <begin position="1"/>
        <end position="621"/>
    </location>
</feature>
<feature type="short sequence motif" description="HXXXXD motif">
    <location>
        <begin position="123"/>
        <end position="128"/>
    </location>
</feature>
<sequence>MTAREVGRIGLRKLLQRIGIVAESMTPLATDPVEVTQLLDARWYDERLRALADELGRDPDSVRAEAAGYLREMAASLDERAVQAWRGFSRWLMRAYDVLVDEDQITQLRKLDRKATLAFAFSHRSYLDGMLLPEAILANRLSPALTFGGANLNFFPMGAWAKRTGAIFIRRQTKDIPVYRFVLRAYAAQLVQNHVNLTWSIEGGRTRTGKLRPPVFGILRYITDAVDEIDGPEVYLVPTSIVYDQLHEVEAMTTEAYGAVKRPEDLRFLVRLARQQGERLGRAYLDFGEPLPLRKRLQEMRADKSGTGSEIERIALDVEHRINRATPVTPTAVVSLALLGADRSLSISEVLATVRPLASYIAARNWAVAGAADLTNRSTIRWTLHQMVASGVVSVYDAGTEAVWGIGEDQHLVAAFYRNTAIHILVDRAVAELALLAAAETTTNGSVSPATVRDEALSLRDLLKFEFLFSGRAQFEKDLANEVLLIGSVVDTSKPAAAADVWRLLESADVLLAHLVLRPFLDAYHIVADRLAAHEDDSFDEEGFLAECLQVGKQWELQRNIASAESRSMELFKTALRLARHRELVDGADATDIAKRRQQFADEIATATRRVNTIAELARRQ</sequence>
<proteinExistence type="inferred from homology"/>
<keyword id="KW-0012">Acyltransferase</keyword>
<keyword id="KW-1003">Cell membrane</keyword>
<keyword id="KW-0472">Membrane</keyword>
<keyword id="KW-1185">Reference proteome</keyword>
<keyword id="KW-0808">Transferase</keyword>
<accession>P65735</accession>
<accession>A0A1R3XYN2</accession>
<accession>Q10775</accession>
<accession>X2BIP2</accession>
<organism>
    <name type="scientific">Mycobacterium bovis (strain ATCC BAA-935 / AF2122/97)</name>
    <dbReference type="NCBI Taxonomy" id="233413"/>
    <lineage>
        <taxon>Bacteria</taxon>
        <taxon>Bacillati</taxon>
        <taxon>Actinomycetota</taxon>
        <taxon>Actinomycetes</taxon>
        <taxon>Mycobacteriales</taxon>
        <taxon>Mycobacteriaceae</taxon>
        <taxon>Mycobacterium</taxon>
        <taxon>Mycobacterium tuberculosis complex</taxon>
    </lineage>
</organism>
<comment type="subcellular location">
    <subcellularLocation>
        <location evidence="1">Cell membrane</location>
        <topology evidence="1">Peripheral membrane protein</topology>
        <orientation evidence="1">Cytoplasmic side</orientation>
    </subcellularLocation>
</comment>
<comment type="domain">
    <text evidence="1">The HXXXXD motif is essential for acyltransferase activity and may constitute the binding site for the phosphate moiety of the glycerol-3-phosphate.</text>
</comment>
<comment type="similarity">
    <text evidence="2">Belongs to the GPAT/DAPAT family.</text>
</comment>
<dbReference type="EMBL" id="LT708304">
    <property type="protein sequence ID" value="SIU00180.1"/>
    <property type="molecule type" value="Genomic_DNA"/>
</dbReference>
<dbReference type="RefSeq" id="NP_855229.1">
    <property type="nucleotide sequence ID" value="NC_002945.3"/>
</dbReference>
<dbReference type="RefSeq" id="WP_003407762.1">
    <property type="nucleotide sequence ID" value="NC_002945.4"/>
</dbReference>
<dbReference type="SMR" id="P65735"/>
<dbReference type="KEGG" id="mbo:BQ2027_MB1577"/>
<dbReference type="PATRIC" id="fig|233413.5.peg.1723"/>
<dbReference type="Proteomes" id="UP000001419">
    <property type="component" value="Chromosome"/>
</dbReference>
<dbReference type="GO" id="GO:0005886">
    <property type="term" value="C:plasma membrane"/>
    <property type="evidence" value="ECO:0007669"/>
    <property type="project" value="UniProtKB-SubCell"/>
</dbReference>
<dbReference type="GO" id="GO:0004366">
    <property type="term" value="F:glycerol-3-phosphate O-acyltransferase activity"/>
    <property type="evidence" value="ECO:0007669"/>
    <property type="project" value="InterPro"/>
</dbReference>
<dbReference type="GO" id="GO:0008654">
    <property type="term" value="P:phospholipid biosynthetic process"/>
    <property type="evidence" value="ECO:0007669"/>
    <property type="project" value="InterPro"/>
</dbReference>
<dbReference type="CDD" id="cd07993">
    <property type="entry name" value="LPLAT_DHAPAT-like"/>
    <property type="match status" value="1"/>
</dbReference>
<dbReference type="InterPro" id="IPR022284">
    <property type="entry name" value="GPAT/DHAPAT"/>
</dbReference>
<dbReference type="InterPro" id="IPR045520">
    <property type="entry name" value="GPAT/DHAPAT_C"/>
</dbReference>
<dbReference type="InterPro" id="IPR041728">
    <property type="entry name" value="GPAT/DHAPAT_LPLAT"/>
</dbReference>
<dbReference type="InterPro" id="IPR028354">
    <property type="entry name" value="GPAT_PlsB"/>
</dbReference>
<dbReference type="InterPro" id="IPR002123">
    <property type="entry name" value="Plipid/glycerol_acylTrfase"/>
</dbReference>
<dbReference type="NCBIfam" id="NF008883">
    <property type="entry name" value="PRK11915.1"/>
    <property type="match status" value="1"/>
</dbReference>
<dbReference type="PANTHER" id="PTHR12563:SF17">
    <property type="entry name" value="DIHYDROXYACETONE PHOSPHATE ACYLTRANSFERASE"/>
    <property type="match status" value="1"/>
</dbReference>
<dbReference type="PANTHER" id="PTHR12563">
    <property type="entry name" value="GLYCEROL-3-PHOSPHATE ACYLTRANSFERASE"/>
    <property type="match status" value="1"/>
</dbReference>
<dbReference type="Pfam" id="PF01553">
    <property type="entry name" value="Acyltransferase"/>
    <property type="match status" value="1"/>
</dbReference>
<dbReference type="Pfam" id="PF19277">
    <property type="entry name" value="GPAT_C"/>
    <property type="match status" value="1"/>
</dbReference>
<dbReference type="PIRSF" id="PIRSF500064">
    <property type="entry name" value="GPAT"/>
    <property type="match status" value="1"/>
</dbReference>
<dbReference type="PIRSF" id="PIRSF000437">
    <property type="entry name" value="GPAT_DHAPAT"/>
    <property type="match status" value="1"/>
</dbReference>
<dbReference type="SMART" id="SM00563">
    <property type="entry name" value="PlsC"/>
    <property type="match status" value="1"/>
</dbReference>
<dbReference type="SUPFAM" id="SSF69593">
    <property type="entry name" value="Glycerol-3-phosphate (1)-acyltransferase"/>
    <property type="match status" value="1"/>
</dbReference>
<protein>
    <recommendedName>
        <fullName>Putative acyltransferase plsB1</fullName>
    </recommendedName>
</protein>
<evidence type="ECO:0000250" key="1"/>
<evidence type="ECO:0000305" key="2"/>